<evidence type="ECO:0000255" key="1">
    <source>
        <dbReference type="HAMAP-Rule" id="MF_00131"/>
    </source>
</evidence>
<keyword id="KW-0028">Amino-acid biosynthesis</keyword>
<keyword id="KW-0057">Aromatic amino acid biosynthesis</keyword>
<keyword id="KW-0456">Lyase</keyword>
<keyword id="KW-1185">Reference proteome</keyword>
<keyword id="KW-0822">Tryptophan biosynthesis</keyword>
<accession>Q5E624</accession>
<comment type="function">
    <text evidence="1">The alpha subunit is responsible for the aldol cleavage of indoleglycerol phosphate to indole and glyceraldehyde 3-phosphate.</text>
</comment>
<comment type="catalytic activity">
    <reaction evidence="1">
        <text>(1S,2R)-1-C-(indol-3-yl)glycerol 3-phosphate + L-serine = D-glyceraldehyde 3-phosphate + L-tryptophan + H2O</text>
        <dbReference type="Rhea" id="RHEA:10532"/>
        <dbReference type="ChEBI" id="CHEBI:15377"/>
        <dbReference type="ChEBI" id="CHEBI:33384"/>
        <dbReference type="ChEBI" id="CHEBI:57912"/>
        <dbReference type="ChEBI" id="CHEBI:58866"/>
        <dbReference type="ChEBI" id="CHEBI:59776"/>
        <dbReference type="EC" id="4.2.1.20"/>
    </reaction>
</comment>
<comment type="pathway">
    <text evidence="1">Amino-acid biosynthesis; L-tryptophan biosynthesis; L-tryptophan from chorismate: step 5/5.</text>
</comment>
<comment type="subunit">
    <text evidence="1">Tetramer of two alpha and two beta chains.</text>
</comment>
<comment type="similarity">
    <text evidence="1">Belongs to the TrpA family.</text>
</comment>
<reference key="1">
    <citation type="journal article" date="2005" name="Proc. Natl. Acad. Sci. U.S.A.">
        <title>Complete genome sequence of Vibrio fischeri: a symbiotic bacterium with pathogenic congeners.</title>
        <authorList>
            <person name="Ruby E.G."/>
            <person name="Urbanowski M."/>
            <person name="Campbell J."/>
            <person name="Dunn A."/>
            <person name="Faini M."/>
            <person name="Gunsalus R."/>
            <person name="Lostroh P."/>
            <person name="Lupp C."/>
            <person name="McCann J."/>
            <person name="Millikan D."/>
            <person name="Schaefer A."/>
            <person name="Stabb E."/>
            <person name="Stevens A."/>
            <person name="Visick K."/>
            <person name="Whistler C."/>
            <person name="Greenberg E.P."/>
        </authorList>
    </citation>
    <scope>NUCLEOTIDE SEQUENCE [LARGE SCALE GENOMIC DNA]</scope>
    <source>
        <strain>ATCC 700601 / ES114</strain>
    </source>
</reference>
<gene>
    <name evidence="1" type="primary">trpA</name>
    <name type="ordered locus">VF_1027</name>
</gene>
<feature type="chain" id="PRO_0000098869" description="Tryptophan synthase alpha chain">
    <location>
        <begin position="1"/>
        <end position="268"/>
    </location>
</feature>
<feature type="active site" description="Proton acceptor" evidence="1">
    <location>
        <position position="49"/>
    </location>
</feature>
<feature type="active site" description="Proton acceptor" evidence="1">
    <location>
        <position position="60"/>
    </location>
</feature>
<name>TRPA_ALIF1</name>
<sequence>MDRYQALFAQLEKKNQGAFVPFVTIGDPNPELSYDIMETLIEAGADALELGIPFSDPLADGPTIQGANIRALDSKTTPAICFELITKIRSKYPDTPIGLLVYANLVFANGIDNFYTKCQQAGVDSVLIADVPTNESQEFRESAIEHGIHPIFIAPPSASPETLETVAKLGGGYTYLLSRAGVTGAETKAGMPVAQLLERLNQYDAPPAILGFGISEPAQVEEAVKAGAAGAISGSATVKLIEQHQANPEALLKALADFTSSMKAATQK</sequence>
<protein>
    <recommendedName>
        <fullName evidence="1">Tryptophan synthase alpha chain</fullName>
        <ecNumber evidence="1">4.2.1.20</ecNumber>
    </recommendedName>
</protein>
<proteinExistence type="inferred from homology"/>
<organism>
    <name type="scientific">Aliivibrio fischeri (strain ATCC 700601 / ES114)</name>
    <name type="common">Vibrio fischeri</name>
    <dbReference type="NCBI Taxonomy" id="312309"/>
    <lineage>
        <taxon>Bacteria</taxon>
        <taxon>Pseudomonadati</taxon>
        <taxon>Pseudomonadota</taxon>
        <taxon>Gammaproteobacteria</taxon>
        <taxon>Vibrionales</taxon>
        <taxon>Vibrionaceae</taxon>
        <taxon>Aliivibrio</taxon>
    </lineage>
</organism>
<dbReference type="EC" id="4.2.1.20" evidence="1"/>
<dbReference type="EMBL" id="CP000020">
    <property type="protein sequence ID" value="AAW85522.1"/>
    <property type="molecule type" value="Genomic_DNA"/>
</dbReference>
<dbReference type="RefSeq" id="WP_011261659.1">
    <property type="nucleotide sequence ID" value="NC_006840.2"/>
</dbReference>
<dbReference type="RefSeq" id="YP_204410.1">
    <property type="nucleotide sequence ID" value="NC_006840.2"/>
</dbReference>
<dbReference type="SMR" id="Q5E624"/>
<dbReference type="STRING" id="312309.VF_1027"/>
<dbReference type="EnsemblBacteria" id="AAW85522">
    <property type="protein sequence ID" value="AAW85522"/>
    <property type="gene ID" value="VF_1027"/>
</dbReference>
<dbReference type="GeneID" id="54163699"/>
<dbReference type="KEGG" id="vfi:VF_1027"/>
<dbReference type="PATRIC" id="fig|312309.11.peg.1027"/>
<dbReference type="eggNOG" id="COG0159">
    <property type="taxonomic scope" value="Bacteria"/>
</dbReference>
<dbReference type="HOGENOM" id="CLU_016734_0_4_6"/>
<dbReference type="OrthoDB" id="9804578at2"/>
<dbReference type="UniPathway" id="UPA00035">
    <property type="reaction ID" value="UER00044"/>
</dbReference>
<dbReference type="Proteomes" id="UP000000537">
    <property type="component" value="Chromosome I"/>
</dbReference>
<dbReference type="GO" id="GO:0005829">
    <property type="term" value="C:cytosol"/>
    <property type="evidence" value="ECO:0007669"/>
    <property type="project" value="TreeGrafter"/>
</dbReference>
<dbReference type="GO" id="GO:0004834">
    <property type="term" value="F:tryptophan synthase activity"/>
    <property type="evidence" value="ECO:0007669"/>
    <property type="project" value="UniProtKB-UniRule"/>
</dbReference>
<dbReference type="CDD" id="cd04724">
    <property type="entry name" value="Tryptophan_synthase_alpha"/>
    <property type="match status" value="1"/>
</dbReference>
<dbReference type="FunFam" id="3.20.20.70:FF:000037">
    <property type="entry name" value="Tryptophan synthase alpha chain"/>
    <property type="match status" value="1"/>
</dbReference>
<dbReference type="Gene3D" id="3.20.20.70">
    <property type="entry name" value="Aldolase class I"/>
    <property type="match status" value="1"/>
</dbReference>
<dbReference type="HAMAP" id="MF_00131">
    <property type="entry name" value="Trp_synth_alpha"/>
    <property type="match status" value="1"/>
</dbReference>
<dbReference type="InterPro" id="IPR013785">
    <property type="entry name" value="Aldolase_TIM"/>
</dbReference>
<dbReference type="InterPro" id="IPR011060">
    <property type="entry name" value="RibuloseP-bd_barrel"/>
</dbReference>
<dbReference type="InterPro" id="IPR018204">
    <property type="entry name" value="Trp_synthase_alpha_AS"/>
</dbReference>
<dbReference type="InterPro" id="IPR002028">
    <property type="entry name" value="Trp_synthase_suA"/>
</dbReference>
<dbReference type="NCBIfam" id="TIGR00262">
    <property type="entry name" value="trpA"/>
    <property type="match status" value="1"/>
</dbReference>
<dbReference type="PANTHER" id="PTHR43406:SF1">
    <property type="entry name" value="TRYPTOPHAN SYNTHASE ALPHA CHAIN, CHLOROPLASTIC"/>
    <property type="match status" value="1"/>
</dbReference>
<dbReference type="PANTHER" id="PTHR43406">
    <property type="entry name" value="TRYPTOPHAN SYNTHASE, ALPHA CHAIN"/>
    <property type="match status" value="1"/>
</dbReference>
<dbReference type="Pfam" id="PF00290">
    <property type="entry name" value="Trp_syntA"/>
    <property type="match status" value="1"/>
</dbReference>
<dbReference type="SUPFAM" id="SSF51366">
    <property type="entry name" value="Ribulose-phoshate binding barrel"/>
    <property type="match status" value="1"/>
</dbReference>
<dbReference type="PROSITE" id="PS00167">
    <property type="entry name" value="TRP_SYNTHASE_ALPHA"/>
    <property type="match status" value="1"/>
</dbReference>